<protein>
    <recommendedName>
        <fullName evidence="1">Phosphoenolpyruvate carboxykinase (ATP)</fullName>
        <shortName evidence="1">PCK</shortName>
        <shortName evidence="1">PEP carboxykinase</shortName>
        <shortName evidence="1">PEPCK</shortName>
        <ecNumber evidence="1">4.1.1.49</ecNumber>
    </recommendedName>
</protein>
<reference key="1">
    <citation type="journal article" date="2011" name="J. Bacteriol.">
        <title>Comparative genomics of 28 Salmonella enterica isolates: evidence for CRISPR-mediated adaptive sublineage evolution.</title>
        <authorList>
            <person name="Fricke W.F."/>
            <person name="Mammel M.K."/>
            <person name="McDermott P.F."/>
            <person name="Tartera C."/>
            <person name="White D.G."/>
            <person name="Leclerc J.E."/>
            <person name="Ravel J."/>
            <person name="Cebula T.A."/>
        </authorList>
    </citation>
    <scope>NUCLEOTIDE SEQUENCE [LARGE SCALE GENOMIC DNA]</scope>
    <source>
        <strain>CT_02021853</strain>
    </source>
</reference>
<feature type="chain" id="PRO_1000192324" description="Phosphoenolpyruvate carboxykinase (ATP)">
    <location>
        <begin position="1"/>
        <end position="539"/>
    </location>
</feature>
<feature type="binding site" evidence="1">
    <location>
        <position position="64"/>
    </location>
    <ligand>
        <name>substrate</name>
    </ligand>
</feature>
<feature type="binding site" evidence="1">
    <location>
        <position position="206"/>
    </location>
    <ligand>
        <name>substrate</name>
    </ligand>
</feature>
<feature type="binding site" evidence="1">
    <location>
        <position position="212"/>
    </location>
    <ligand>
        <name>ATP</name>
        <dbReference type="ChEBI" id="CHEBI:30616"/>
    </ligand>
</feature>
<feature type="binding site" evidence="1">
    <location>
        <position position="212"/>
    </location>
    <ligand>
        <name>Mn(2+)</name>
        <dbReference type="ChEBI" id="CHEBI:29035"/>
    </ligand>
</feature>
<feature type="binding site" evidence="1">
    <location>
        <position position="212"/>
    </location>
    <ligand>
        <name>substrate</name>
    </ligand>
</feature>
<feature type="binding site" evidence="1">
    <location>
        <position position="231"/>
    </location>
    <ligand>
        <name>ATP</name>
        <dbReference type="ChEBI" id="CHEBI:30616"/>
    </ligand>
</feature>
<feature type="binding site" evidence="1">
    <location>
        <position position="231"/>
    </location>
    <ligand>
        <name>Mn(2+)</name>
        <dbReference type="ChEBI" id="CHEBI:29035"/>
    </ligand>
</feature>
<feature type="binding site" evidence="1">
    <location>
        <begin position="247"/>
        <end position="255"/>
    </location>
    <ligand>
        <name>ATP</name>
        <dbReference type="ChEBI" id="CHEBI:30616"/>
    </ligand>
</feature>
<feature type="binding site" evidence="1">
    <location>
        <position position="268"/>
    </location>
    <ligand>
        <name>Mn(2+)</name>
        <dbReference type="ChEBI" id="CHEBI:29035"/>
    </ligand>
</feature>
<feature type="binding site" evidence="1">
    <location>
        <position position="296"/>
    </location>
    <ligand>
        <name>ATP</name>
        <dbReference type="ChEBI" id="CHEBI:30616"/>
    </ligand>
</feature>
<feature type="binding site" evidence="1">
    <location>
        <position position="332"/>
    </location>
    <ligand>
        <name>ATP</name>
        <dbReference type="ChEBI" id="CHEBI:30616"/>
    </ligand>
</feature>
<feature type="binding site" evidence="1">
    <location>
        <position position="332"/>
    </location>
    <ligand>
        <name>substrate</name>
    </ligand>
</feature>
<feature type="binding site" evidence="1">
    <location>
        <begin position="448"/>
        <end position="449"/>
    </location>
    <ligand>
        <name>ATP</name>
        <dbReference type="ChEBI" id="CHEBI:30616"/>
    </ligand>
</feature>
<feature type="binding site" evidence="1">
    <location>
        <position position="454"/>
    </location>
    <ligand>
        <name>ATP</name>
        <dbReference type="ChEBI" id="CHEBI:30616"/>
    </ligand>
</feature>
<comment type="function">
    <text evidence="1">Involved in the gluconeogenesis. Catalyzes the conversion of oxaloacetate (OAA) to phosphoenolpyruvate (PEP) through direct phosphoryl transfer between the nucleoside triphosphate and OAA.</text>
</comment>
<comment type="catalytic activity">
    <reaction evidence="1">
        <text>oxaloacetate + ATP = phosphoenolpyruvate + ADP + CO2</text>
        <dbReference type="Rhea" id="RHEA:18617"/>
        <dbReference type="ChEBI" id="CHEBI:16452"/>
        <dbReference type="ChEBI" id="CHEBI:16526"/>
        <dbReference type="ChEBI" id="CHEBI:30616"/>
        <dbReference type="ChEBI" id="CHEBI:58702"/>
        <dbReference type="ChEBI" id="CHEBI:456216"/>
        <dbReference type="EC" id="4.1.1.49"/>
    </reaction>
</comment>
<comment type="cofactor">
    <cofactor evidence="1">
        <name>Mn(2+)</name>
        <dbReference type="ChEBI" id="CHEBI:29035"/>
    </cofactor>
    <text evidence="1">Binds 1 Mn(2+) ion per subunit.</text>
</comment>
<comment type="pathway">
    <text evidence="1">Carbohydrate biosynthesis; gluconeogenesis.</text>
</comment>
<comment type="subunit">
    <text evidence="1">Monomer.</text>
</comment>
<comment type="subcellular location">
    <subcellularLocation>
        <location evidence="1">Cytoplasm</location>
    </subcellularLocation>
</comment>
<comment type="similarity">
    <text evidence="1">Belongs to the phosphoenolpyruvate carboxykinase (ATP) family.</text>
</comment>
<name>PCKA_SALDC</name>
<gene>
    <name evidence="1" type="primary">pckA</name>
    <name type="ordered locus">SeD_A3869</name>
</gene>
<keyword id="KW-0067">ATP-binding</keyword>
<keyword id="KW-0963">Cytoplasm</keyword>
<keyword id="KW-0210">Decarboxylase</keyword>
<keyword id="KW-0312">Gluconeogenesis</keyword>
<keyword id="KW-0456">Lyase</keyword>
<keyword id="KW-0464">Manganese</keyword>
<keyword id="KW-0479">Metal-binding</keyword>
<keyword id="KW-0547">Nucleotide-binding</keyword>
<proteinExistence type="inferred from homology"/>
<evidence type="ECO:0000255" key="1">
    <source>
        <dbReference type="HAMAP-Rule" id="MF_00453"/>
    </source>
</evidence>
<accession>B5FJS1</accession>
<organism>
    <name type="scientific">Salmonella dublin (strain CT_02021853)</name>
    <dbReference type="NCBI Taxonomy" id="439851"/>
    <lineage>
        <taxon>Bacteria</taxon>
        <taxon>Pseudomonadati</taxon>
        <taxon>Pseudomonadota</taxon>
        <taxon>Gammaproteobacteria</taxon>
        <taxon>Enterobacterales</taxon>
        <taxon>Enterobacteriaceae</taxon>
        <taxon>Salmonella</taxon>
    </lineage>
</organism>
<dbReference type="EC" id="4.1.1.49" evidence="1"/>
<dbReference type="EMBL" id="CP001144">
    <property type="protein sequence ID" value="ACH75192.1"/>
    <property type="molecule type" value="Genomic_DNA"/>
</dbReference>
<dbReference type="RefSeq" id="WP_001265689.1">
    <property type="nucleotide sequence ID" value="NC_011205.1"/>
</dbReference>
<dbReference type="SMR" id="B5FJS1"/>
<dbReference type="KEGG" id="sed:SeD_A3869"/>
<dbReference type="HOGENOM" id="CLU_018247_0_1_6"/>
<dbReference type="UniPathway" id="UPA00138"/>
<dbReference type="Proteomes" id="UP000008322">
    <property type="component" value="Chromosome"/>
</dbReference>
<dbReference type="GO" id="GO:0005829">
    <property type="term" value="C:cytosol"/>
    <property type="evidence" value="ECO:0007669"/>
    <property type="project" value="TreeGrafter"/>
</dbReference>
<dbReference type="GO" id="GO:0005524">
    <property type="term" value="F:ATP binding"/>
    <property type="evidence" value="ECO:0007669"/>
    <property type="project" value="UniProtKB-UniRule"/>
</dbReference>
<dbReference type="GO" id="GO:0046872">
    <property type="term" value="F:metal ion binding"/>
    <property type="evidence" value="ECO:0007669"/>
    <property type="project" value="UniProtKB-KW"/>
</dbReference>
<dbReference type="GO" id="GO:0004612">
    <property type="term" value="F:phosphoenolpyruvate carboxykinase (ATP) activity"/>
    <property type="evidence" value="ECO:0007669"/>
    <property type="project" value="UniProtKB-UniRule"/>
</dbReference>
<dbReference type="GO" id="GO:0006094">
    <property type="term" value="P:gluconeogenesis"/>
    <property type="evidence" value="ECO:0007669"/>
    <property type="project" value="UniProtKB-UniRule"/>
</dbReference>
<dbReference type="CDD" id="cd00484">
    <property type="entry name" value="PEPCK_ATP"/>
    <property type="match status" value="1"/>
</dbReference>
<dbReference type="FunFam" id="2.170.8.10:FF:000001">
    <property type="entry name" value="Phosphoenolpyruvate carboxykinase (ATP)"/>
    <property type="match status" value="1"/>
</dbReference>
<dbReference type="FunFam" id="3.40.449.10:FF:000001">
    <property type="entry name" value="Phosphoenolpyruvate carboxykinase (ATP)"/>
    <property type="match status" value="1"/>
</dbReference>
<dbReference type="Gene3D" id="3.90.228.20">
    <property type="match status" value="1"/>
</dbReference>
<dbReference type="Gene3D" id="3.40.449.10">
    <property type="entry name" value="Phosphoenolpyruvate Carboxykinase, domain 1"/>
    <property type="match status" value="1"/>
</dbReference>
<dbReference type="Gene3D" id="2.170.8.10">
    <property type="entry name" value="Phosphoenolpyruvate Carboxykinase, domain 2"/>
    <property type="match status" value="1"/>
</dbReference>
<dbReference type="HAMAP" id="MF_00453">
    <property type="entry name" value="PEPCK_ATP"/>
    <property type="match status" value="1"/>
</dbReference>
<dbReference type="InterPro" id="IPR001272">
    <property type="entry name" value="PEP_carboxykinase_ATP"/>
</dbReference>
<dbReference type="InterPro" id="IPR013035">
    <property type="entry name" value="PEP_carboxykinase_C"/>
</dbReference>
<dbReference type="InterPro" id="IPR008210">
    <property type="entry name" value="PEP_carboxykinase_N"/>
</dbReference>
<dbReference type="InterPro" id="IPR015994">
    <property type="entry name" value="PEPCK_ATP_CS"/>
</dbReference>
<dbReference type="NCBIfam" id="TIGR00224">
    <property type="entry name" value="pckA"/>
    <property type="match status" value="1"/>
</dbReference>
<dbReference type="NCBIfam" id="NF006819">
    <property type="entry name" value="PRK09344.1-1"/>
    <property type="match status" value="1"/>
</dbReference>
<dbReference type="NCBIfam" id="NF006820">
    <property type="entry name" value="PRK09344.1-2"/>
    <property type="match status" value="1"/>
</dbReference>
<dbReference type="NCBIfam" id="NF006821">
    <property type="entry name" value="PRK09344.1-3"/>
    <property type="match status" value="1"/>
</dbReference>
<dbReference type="PANTHER" id="PTHR30031:SF0">
    <property type="entry name" value="PHOSPHOENOLPYRUVATE CARBOXYKINASE (ATP)"/>
    <property type="match status" value="1"/>
</dbReference>
<dbReference type="PANTHER" id="PTHR30031">
    <property type="entry name" value="PHOSPHOENOLPYRUVATE CARBOXYKINASE ATP"/>
    <property type="match status" value="1"/>
</dbReference>
<dbReference type="Pfam" id="PF01293">
    <property type="entry name" value="PEPCK_ATP"/>
    <property type="match status" value="1"/>
</dbReference>
<dbReference type="PIRSF" id="PIRSF006294">
    <property type="entry name" value="PEP_crbxkin"/>
    <property type="match status" value="1"/>
</dbReference>
<dbReference type="SUPFAM" id="SSF68923">
    <property type="entry name" value="PEP carboxykinase N-terminal domain"/>
    <property type="match status" value="1"/>
</dbReference>
<dbReference type="SUPFAM" id="SSF53795">
    <property type="entry name" value="PEP carboxykinase-like"/>
    <property type="match status" value="1"/>
</dbReference>
<dbReference type="PROSITE" id="PS00532">
    <property type="entry name" value="PEPCK_ATP"/>
    <property type="match status" value="1"/>
</dbReference>
<sequence>MRVNNLTPQDLKAYGINDVQDIVYNPSYDTLYQEELNPGLEGYERGVLTNLGAVAVDTGIFTGRSPKDKYIVRDDTTRDTLWWSDKGKGKNDNKPLSQETWQHLKGLVTHQLSGKRLFIVDAFCGANADTRLSVRFITEVAWQAHFVKNMFIRPTDEELVGFKPDFIVMNGAKCTNPQWKEQGLNSENFVAFNLTERIQLIGGTWYGGEMKKGMFSVMNYLLPLKGIASMHCSANVGEKGDVAVFFGLSGTGKTTLSTDPKRRLIGDDEHGWDDDGVFNFEGGCYAKTIKLSKEAEPEIYHAIRRDALLENVTVREDGTVDFDDGSKTENTRVSYPIYHIDNIVKPVSKAGHATKVIFLTADAFGVLPPVSRLTANQTQYHFLSGFTAKLAGTERGVTEPTPTFSACFGAAFLTLHPTQYAEVLVKRMQAAGAQAYLVNTGWNGTGKRISIKDTRAIIDAILNGSLDNAETFRLPLFDLAIPTELPGVDTHILDPRNTYASPEQWQEKATALAKLFIENFEKYTDTPAGEALVSAGPKL</sequence>